<proteinExistence type="inferred from homology"/>
<gene>
    <name evidence="1" type="primary">glmM</name>
    <name type="ordered locus">SAUSA300_2111</name>
</gene>
<keyword id="KW-0413">Isomerase</keyword>
<keyword id="KW-0460">Magnesium</keyword>
<keyword id="KW-0479">Metal-binding</keyword>
<keyword id="KW-0597">Phosphoprotein</keyword>
<organism>
    <name type="scientific">Staphylococcus aureus (strain USA300)</name>
    <dbReference type="NCBI Taxonomy" id="367830"/>
    <lineage>
        <taxon>Bacteria</taxon>
        <taxon>Bacillati</taxon>
        <taxon>Bacillota</taxon>
        <taxon>Bacilli</taxon>
        <taxon>Bacillales</taxon>
        <taxon>Staphylococcaceae</taxon>
        <taxon>Staphylococcus</taxon>
    </lineage>
</organism>
<sequence length="451" mass="49266">MGKYFGTDGVRGVANQELTPELAFKLGRYGGYVLAHNKGEKHPRVLVGRDTRVSGEMLESALIAGLISIGAEVMRLGIISTPGVAYLTRDMGAELGVMISASHNPVADNGIKFFGSDGFKLSDEQENEIEALLDQENPELPRPVGNDIVHYSDYFEGAQKYLSYLKSTVDVNFEGLKIALDGANGSTSSLAPFLFGDLEADTETIGCSPDGYNINEKCGSTHPEKLAEKVVETESDFGLAFDGDGDRIIAVDENGQIVDGDQIMFIIGQEMHKNQELNNDMIVSTVMSNLGFYKALEQEGIKSNKTKVGDRYVVEEMRRGNYNLGGEQSGHIVMMDYNTTGDGLLTGIQLASVIKMTGKSLSELAGQMKKYPQSLINVRVTDKYRVEENVDVKEVMTKVEVEMNGEGRILVRPSGTEPLVRVMVEAATDEDAERFAQQIADVVQDKMGLDK</sequence>
<name>GLMM_STAA3</name>
<dbReference type="EC" id="5.4.2.10" evidence="1"/>
<dbReference type="EMBL" id="CP000255">
    <property type="protein sequence ID" value="ABD21310.1"/>
    <property type="molecule type" value="Genomic_DNA"/>
</dbReference>
<dbReference type="RefSeq" id="WP_000521491.1">
    <property type="nucleotide sequence ID" value="NZ_CP027476.1"/>
</dbReference>
<dbReference type="SASBDB" id="Q2FEX1"/>
<dbReference type="SMR" id="Q2FEX1"/>
<dbReference type="KEGG" id="saa:SAUSA300_2111"/>
<dbReference type="HOGENOM" id="CLU_016950_7_0_9"/>
<dbReference type="OMA" id="SHNAMPD"/>
<dbReference type="Proteomes" id="UP000001939">
    <property type="component" value="Chromosome"/>
</dbReference>
<dbReference type="GO" id="GO:0005829">
    <property type="term" value="C:cytosol"/>
    <property type="evidence" value="ECO:0007669"/>
    <property type="project" value="TreeGrafter"/>
</dbReference>
<dbReference type="GO" id="GO:0000287">
    <property type="term" value="F:magnesium ion binding"/>
    <property type="evidence" value="ECO:0007669"/>
    <property type="project" value="UniProtKB-UniRule"/>
</dbReference>
<dbReference type="GO" id="GO:0008966">
    <property type="term" value="F:phosphoglucosamine mutase activity"/>
    <property type="evidence" value="ECO:0007669"/>
    <property type="project" value="UniProtKB-UniRule"/>
</dbReference>
<dbReference type="GO" id="GO:0004615">
    <property type="term" value="F:phosphomannomutase activity"/>
    <property type="evidence" value="ECO:0007669"/>
    <property type="project" value="TreeGrafter"/>
</dbReference>
<dbReference type="GO" id="GO:0005975">
    <property type="term" value="P:carbohydrate metabolic process"/>
    <property type="evidence" value="ECO:0007669"/>
    <property type="project" value="InterPro"/>
</dbReference>
<dbReference type="GO" id="GO:0009252">
    <property type="term" value="P:peptidoglycan biosynthetic process"/>
    <property type="evidence" value="ECO:0007669"/>
    <property type="project" value="TreeGrafter"/>
</dbReference>
<dbReference type="GO" id="GO:0006048">
    <property type="term" value="P:UDP-N-acetylglucosamine biosynthetic process"/>
    <property type="evidence" value="ECO:0007669"/>
    <property type="project" value="TreeGrafter"/>
</dbReference>
<dbReference type="CDD" id="cd05802">
    <property type="entry name" value="GlmM"/>
    <property type="match status" value="1"/>
</dbReference>
<dbReference type="FunFam" id="3.30.310.50:FF:000001">
    <property type="entry name" value="Phosphoglucosamine mutase"/>
    <property type="match status" value="1"/>
</dbReference>
<dbReference type="FunFam" id="3.40.120.10:FF:000001">
    <property type="entry name" value="Phosphoglucosamine mutase"/>
    <property type="match status" value="1"/>
</dbReference>
<dbReference type="FunFam" id="3.40.120.10:FF:000002">
    <property type="entry name" value="Phosphoglucosamine mutase"/>
    <property type="match status" value="1"/>
</dbReference>
<dbReference type="Gene3D" id="3.40.120.10">
    <property type="entry name" value="Alpha-D-Glucose-1,6-Bisphosphate, subunit A, domain 3"/>
    <property type="match status" value="3"/>
</dbReference>
<dbReference type="Gene3D" id="3.30.310.50">
    <property type="entry name" value="Alpha-D-phosphohexomutase, C-terminal domain"/>
    <property type="match status" value="1"/>
</dbReference>
<dbReference type="HAMAP" id="MF_01554_B">
    <property type="entry name" value="GlmM_B"/>
    <property type="match status" value="1"/>
</dbReference>
<dbReference type="InterPro" id="IPR005844">
    <property type="entry name" value="A-D-PHexomutase_a/b/a-I"/>
</dbReference>
<dbReference type="InterPro" id="IPR016055">
    <property type="entry name" value="A-D-PHexomutase_a/b/a-I/II/III"/>
</dbReference>
<dbReference type="InterPro" id="IPR005845">
    <property type="entry name" value="A-D-PHexomutase_a/b/a-II"/>
</dbReference>
<dbReference type="InterPro" id="IPR005846">
    <property type="entry name" value="A-D-PHexomutase_a/b/a-III"/>
</dbReference>
<dbReference type="InterPro" id="IPR005843">
    <property type="entry name" value="A-D-PHexomutase_C"/>
</dbReference>
<dbReference type="InterPro" id="IPR036900">
    <property type="entry name" value="A-D-PHexomutase_C_sf"/>
</dbReference>
<dbReference type="InterPro" id="IPR016066">
    <property type="entry name" value="A-D-PHexomutase_CS"/>
</dbReference>
<dbReference type="InterPro" id="IPR005841">
    <property type="entry name" value="Alpha-D-phosphohexomutase_SF"/>
</dbReference>
<dbReference type="InterPro" id="IPR006352">
    <property type="entry name" value="GlmM_bact"/>
</dbReference>
<dbReference type="InterPro" id="IPR050060">
    <property type="entry name" value="Phosphoglucosamine_mutase"/>
</dbReference>
<dbReference type="NCBIfam" id="TIGR01455">
    <property type="entry name" value="glmM"/>
    <property type="match status" value="1"/>
</dbReference>
<dbReference type="NCBIfam" id="NF008139">
    <property type="entry name" value="PRK10887.1"/>
    <property type="match status" value="1"/>
</dbReference>
<dbReference type="PANTHER" id="PTHR42946:SF1">
    <property type="entry name" value="PHOSPHOGLUCOMUTASE (ALPHA-D-GLUCOSE-1,6-BISPHOSPHATE-DEPENDENT)"/>
    <property type="match status" value="1"/>
</dbReference>
<dbReference type="PANTHER" id="PTHR42946">
    <property type="entry name" value="PHOSPHOHEXOSE MUTASE"/>
    <property type="match status" value="1"/>
</dbReference>
<dbReference type="Pfam" id="PF02878">
    <property type="entry name" value="PGM_PMM_I"/>
    <property type="match status" value="1"/>
</dbReference>
<dbReference type="Pfam" id="PF02879">
    <property type="entry name" value="PGM_PMM_II"/>
    <property type="match status" value="1"/>
</dbReference>
<dbReference type="Pfam" id="PF02880">
    <property type="entry name" value="PGM_PMM_III"/>
    <property type="match status" value="1"/>
</dbReference>
<dbReference type="Pfam" id="PF00408">
    <property type="entry name" value="PGM_PMM_IV"/>
    <property type="match status" value="1"/>
</dbReference>
<dbReference type="PRINTS" id="PR00509">
    <property type="entry name" value="PGMPMM"/>
</dbReference>
<dbReference type="SUPFAM" id="SSF55957">
    <property type="entry name" value="Phosphoglucomutase, C-terminal domain"/>
    <property type="match status" value="1"/>
</dbReference>
<dbReference type="SUPFAM" id="SSF53738">
    <property type="entry name" value="Phosphoglucomutase, first 3 domains"/>
    <property type="match status" value="3"/>
</dbReference>
<dbReference type="PROSITE" id="PS00710">
    <property type="entry name" value="PGM_PMM"/>
    <property type="match status" value="1"/>
</dbReference>
<feature type="chain" id="PRO_0000301385" description="Phosphoglucosamine mutase">
    <location>
        <begin position="1"/>
        <end position="451"/>
    </location>
</feature>
<feature type="active site" description="Phosphoserine intermediate" evidence="1">
    <location>
        <position position="102"/>
    </location>
</feature>
<feature type="binding site" description="via phosphate group" evidence="1">
    <location>
        <position position="102"/>
    </location>
    <ligand>
        <name>Mg(2+)</name>
        <dbReference type="ChEBI" id="CHEBI:18420"/>
    </ligand>
</feature>
<feature type="binding site" evidence="1">
    <location>
        <position position="242"/>
    </location>
    <ligand>
        <name>Mg(2+)</name>
        <dbReference type="ChEBI" id="CHEBI:18420"/>
    </ligand>
</feature>
<feature type="binding site" evidence="1">
    <location>
        <position position="244"/>
    </location>
    <ligand>
        <name>Mg(2+)</name>
        <dbReference type="ChEBI" id="CHEBI:18420"/>
    </ligand>
</feature>
<feature type="binding site" evidence="1">
    <location>
        <position position="246"/>
    </location>
    <ligand>
        <name>Mg(2+)</name>
        <dbReference type="ChEBI" id="CHEBI:18420"/>
    </ligand>
</feature>
<feature type="modified residue" description="Phosphoserine" evidence="1">
    <location>
        <position position="102"/>
    </location>
</feature>
<protein>
    <recommendedName>
        <fullName evidence="1">Phosphoglucosamine mutase</fullName>
        <ecNumber evidence="1">5.4.2.10</ecNumber>
    </recommendedName>
</protein>
<reference key="1">
    <citation type="journal article" date="2006" name="Lancet">
        <title>Complete genome sequence of USA300, an epidemic clone of community-acquired meticillin-resistant Staphylococcus aureus.</title>
        <authorList>
            <person name="Diep B.A."/>
            <person name="Gill S.R."/>
            <person name="Chang R.F."/>
            <person name="Phan T.H."/>
            <person name="Chen J.H."/>
            <person name="Davidson M.G."/>
            <person name="Lin F."/>
            <person name="Lin J."/>
            <person name="Carleton H.A."/>
            <person name="Mongodin E.F."/>
            <person name="Sensabaugh G.F."/>
            <person name="Perdreau-Remington F."/>
        </authorList>
    </citation>
    <scope>NUCLEOTIDE SEQUENCE [LARGE SCALE GENOMIC DNA]</scope>
    <source>
        <strain>USA300</strain>
    </source>
</reference>
<comment type="function">
    <text evidence="1">Catalyzes the conversion of glucosamine-6-phosphate to glucosamine-1-phosphate.</text>
</comment>
<comment type="catalytic activity">
    <reaction evidence="1">
        <text>alpha-D-glucosamine 1-phosphate = D-glucosamine 6-phosphate</text>
        <dbReference type="Rhea" id="RHEA:23424"/>
        <dbReference type="ChEBI" id="CHEBI:58516"/>
        <dbReference type="ChEBI" id="CHEBI:58725"/>
        <dbReference type="EC" id="5.4.2.10"/>
    </reaction>
</comment>
<comment type="cofactor">
    <cofactor evidence="1">
        <name>Mg(2+)</name>
        <dbReference type="ChEBI" id="CHEBI:18420"/>
    </cofactor>
    <text evidence="1">Binds 1 Mg(2+) ion per subunit.</text>
</comment>
<comment type="PTM">
    <text evidence="1">Activated by phosphorylation.</text>
</comment>
<comment type="similarity">
    <text evidence="1">Belongs to the phosphohexose mutase family.</text>
</comment>
<evidence type="ECO:0000255" key="1">
    <source>
        <dbReference type="HAMAP-Rule" id="MF_01554"/>
    </source>
</evidence>
<accession>Q2FEX1</accession>